<dbReference type="EMBL" id="BX950851">
    <property type="protein sequence ID" value="CAG75235.1"/>
    <property type="molecule type" value="Genomic_DNA"/>
</dbReference>
<dbReference type="RefSeq" id="WP_011093889.1">
    <property type="nucleotide sequence ID" value="NC_004547.2"/>
</dbReference>
<dbReference type="SMR" id="Q6D4Q8"/>
<dbReference type="STRING" id="218491.ECA2332"/>
<dbReference type="KEGG" id="eca:ECA2332"/>
<dbReference type="eggNOG" id="COG3012">
    <property type="taxonomic scope" value="Bacteria"/>
</dbReference>
<dbReference type="HOGENOM" id="CLU_099590_0_0_6"/>
<dbReference type="OrthoDB" id="21421at2"/>
<dbReference type="Proteomes" id="UP000007966">
    <property type="component" value="Chromosome"/>
</dbReference>
<dbReference type="Gene3D" id="3.10.450.50">
    <property type="match status" value="1"/>
</dbReference>
<dbReference type="HAMAP" id="MF_00612">
    <property type="entry name" value="UPF0225"/>
    <property type="match status" value="1"/>
</dbReference>
<dbReference type="InterPro" id="IPR032710">
    <property type="entry name" value="NTF2-like_dom_sf"/>
</dbReference>
<dbReference type="InterPro" id="IPR004027">
    <property type="entry name" value="SEC_C_motif"/>
</dbReference>
<dbReference type="InterPro" id="IPR023006">
    <property type="entry name" value="UPF0225"/>
</dbReference>
<dbReference type="InterPro" id="IPR048469">
    <property type="entry name" value="YchJ-like_M"/>
</dbReference>
<dbReference type="NCBIfam" id="NF002449">
    <property type="entry name" value="PRK01617.1"/>
    <property type="match status" value="1"/>
</dbReference>
<dbReference type="NCBIfam" id="NF002486">
    <property type="entry name" value="PRK01752.1"/>
    <property type="match status" value="1"/>
</dbReference>
<dbReference type="PANTHER" id="PTHR33747:SF1">
    <property type="entry name" value="ADENYLATE CYCLASE-ASSOCIATED CAP C-TERMINAL DOMAIN-CONTAINING PROTEIN"/>
    <property type="match status" value="1"/>
</dbReference>
<dbReference type="PANTHER" id="PTHR33747">
    <property type="entry name" value="UPF0225 PROTEIN SCO1677"/>
    <property type="match status" value="1"/>
</dbReference>
<dbReference type="Pfam" id="PF02810">
    <property type="entry name" value="SEC-C"/>
    <property type="match status" value="1"/>
</dbReference>
<dbReference type="Pfam" id="PF17775">
    <property type="entry name" value="YchJ_M-like"/>
    <property type="match status" value="1"/>
</dbReference>
<dbReference type="SUPFAM" id="SSF54427">
    <property type="entry name" value="NTF2-like"/>
    <property type="match status" value="1"/>
</dbReference>
<dbReference type="SUPFAM" id="SSF103642">
    <property type="entry name" value="Sec-C motif"/>
    <property type="match status" value="1"/>
</dbReference>
<reference key="1">
    <citation type="journal article" date="2004" name="Proc. Natl. Acad. Sci. U.S.A.">
        <title>Genome sequence of the enterobacterial phytopathogen Erwinia carotovora subsp. atroseptica and characterization of virulence factors.</title>
        <authorList>
            <person name="Bell K.S."/>
            <person name="Sebaihia M."/>
            <person name="Pritchard L."/>
            <person name="Holden M.T.G."/>
            <person name="Hyman L.J."/>
            <person name="Holeva M.C."/>
            <person name="Thomson N.R."/>
            <person name="Bentley S.D."/>
            <person name="Churcher L.J.C."/>
            <person name="Mungall K."/>
            <person name="Atkin R."/>
            <person name="Bason N."/>
            <person name="Brooks K."/>
            <person name="Chillingworth T."/>
            <person name="Clark K."/>
            <person name="Doggett J."/>
            <person name="Fraser A."/>
            <person name="Hance Z."/>
            <person name="Hauser H."/>
            <person name="Jagels K."/>
            <person name="Moule S."/>
            <person name="Norbertczak H."/>
            <person name="Ormond D."/>
            <person name="Price C."/>
            <person name="Quail M.A."/>
            <person name="Sanders M."/>
            <person name="Walker D."/>
            <person name="Whitehead S."/>
            <person name="Salmond G.P.C."/>
            <person name="Birch P.R.J."/>
            <person name="Parkhill J."/>
            <person name="Toth I.K."/>
        </authorList>
    </citation>
    <scope>NUCLEOTIDE SEQUENCE [LARGE SCALE GENOMIC DNA]</scope>
    <source>
        <strain>SCRI 1043 / ATCC BAA-672</strain>
    </source>
</reference>
<feature type="chain" id="PRO_1000056725" description="UPF0225 protein ECA2332">
    <location>
        <begin position="1"/>
        <end position="155"/>
    </location>
</feature>
<gene>
    <name type="ordered locus">ECA2332</name>
</gene>
<accession>Q6D4Q8</accession>
<evidence type="ECO:0000255" key="1">
    <source>
        <dbReference type="HAMAP-Rule" id="MF_00612"/>
    </source>
</evidence>
<name>Y2332_PECAS</name>
<sequence>MSESCPCCSGLQYNACCQPYLTHAATAAEPAILMRSRYTAYVKHDVDYLIATWHPDLHPEKWRESLTESCQNSQWLGLTILATSPGKIPDEGYVEFAARYISEIDSQRTEVMRERSRFLRQHNRWYYIDGVHLQTGRNEPCPCGSGKKYKKCCGQ</sequence>
<comment type="similarity">
    <text evidence="1">Belongs to the UPF0225 family.</text>
</comment>
<keyword id="KW-1185">Reference proteome</keyword>
<organism>
    <name type="scientific">Pectobacterium atrosepticum (strain SCRI 1043 / ATCC BAA-672)</name>
    <name type="common">Erwinia carotovora subsp. atroseptica</name>
    <dbReference type="NCBI Taxonomy" id="218491"/>
    <lineage>
        <taxon>Bacteria</taxon>
        <taxon>Pseudomonadati</taxon>
        <taxon>Pseudomonadota</taxon>
        <taxon>Gammaproteobacteria</taxon>
        <taxon>Enterobacterales</taxon>
        <taxon>Pectobacteriaceae</taxon>
        <taxon>Pectobacterium</taxon>
    </lineage>
</organism>
<protein>
    <recommendedName>
        <fullName evidence="1">UPF0225 protein ECA2332</fullName>
    </recommendedName>
</protein>
<proteinExistence type="inferred from homology"/>